<sequence length="194" mass="21121">MGVSNRLAWGCPTKEHLLPHFLEHLGNNHLDIGVGTGFYLTHVPESSLISLMDLNEASLNAASTRAGESKIKHKISHDVFEPYPAALHGQFDSISMSYLLHCLPGNISTKSCVIRNAAQALTDDGTLYGATILGDGVVHNSFGQKLMRIYNQKGIFSNTKDSEEGLTHILSEHFENVKTKVQGTVVMFSASGKK</sequence>
<gene>
    <name type="primary">ybcY</name>
    <name type="ordered locus">b0562</name>
    <name type="ordered locus">JW0551</name>
</gene>
<proteinExistence type="uncertain"/>
<keyword id="KW-1185">Reference proteome</keyword>
<dbReference type="EMBL" id="U82598">
    <property type="protein sequence ID" value="AAB40758.1"/>
    <property type="status" value="ALT_INIT"/>
    <property type="molecule type" value="Genomic_DNA"/>
</dbReference>
<dbReference type="EMBL" id="U00096">
    <property type="status" value="NOT_ANNOTATED_CDS"/>
    <property type="molecule type" value="Genomic_DNA"/>
</dbReference>
<dbReference type="EMBL" id="AP009048">
    <property type="protein sequence ID" value="BAE76337.1"/>
    <property type="molecule type" value="Genomic_DNA"/>
</dbReference>
<dbReference type="PIR" id="H64788">
    <property type="entry name" value="H64788"/>
</dbReference>
<dbReference type="SMR" id="P77460"/>
<dbReference type="BioGRID" id="4260915">
    <property type="interactions" value="5"/>
</dbReference>
<dbReference type="FunCoup" id="P77460">
    <property type="interactions" value="10"/>
</dbReference>
<dbReference type="IntAct" id="P77460">
    <property type="interactions" value="8"/>
</dbReference>
<dbReference type="KEGG" id="ecj:JW0551"/>
<dbReference type="EchoBASE" id="EB3405"/>
<dbReference type="eggNOG" id="COG0500">
    <property type="taxonomic scope" value="Bacteria"/>
</dbReference>
<dbReference type="HOGENOM" id="CLU_046029_0_0_6"/>
<dbReference type="InParanoid" id="P77460"/>
<dbReference type="PhylomeDB" id="P77460"/>
<dbReference type="Proteomes" id="UP000000625">
    <property type="component" value="Chromosome"/>
</dbReference>
<dbReference type="GO" id="GO:0008168">
    <property type="term" value="F:methyltransferase activity"/>
    <property type="evidence" value="ECO:0007669"/>
    <property type="project" value="InterPro"/>
</dbReference>
<dbReference type="Gene3D" id="3.40.50.150">
    <property type="entry name" value="Vaccinia Virus protein VP39"/>
    <property type="match status" value="1"/>
</dbReference>
<dbReference type="InterPro" id="IPR013217">
    <property type="entry name" value="Methyltransf_12"/>
</dbReference>
<dbReference type="InterPro" id="IPR016584">
    <property type="entry name" value="MeTrfase_VrtF"/>
</dbReference>
<dbReference type="InterPro" id="IPR029063">
    <property type="entry name" value="SAM-dependent_MTases_sf"/>
</dbReference>
<dbReference type="Pfam" id="PF08242">
    <property type="entry name" value="Methyltransf_12"/>
    <property type="match status" value="1"/>
</dbReference>
<dbReference type="PIRSF" id="PIRSF011491">
    <property type="entry name" value="Mtase_YbcY_prd"/>
    <property type="match status" value="1"/>
</dbReference>
<dbReference type="SUPFAM" id="SSF53335">
    <property type="entry name" value="S-adenosyl-L-methionine-dependent methyltransferases"/>
    <property type="match status" value="1"/>
</dbReference>
<organism>
    <name type="scientific">Escherichia coli (strain K12)</name>
    <dbReference type="NCBI Taxonomy" id="83333"/>
    <lineage>
        <taxon>Bacteria</taxon>
        <taxon>Pseudomonadati</taxon>
        <taxon>Pseudomonadota</taxon>
        <taxon>Gammaproteobacteria</taxon>
        <taxon>Enterobacterales</taxon>
        <taxon>Enterobacteriaceae</taxon>
        <taxon>Escherichia</taxon>
    </lineage>
</organism>
<name>YBCY_ECOLI</name>
<evidence type="ECO:0000305" key="1"/>
<protein>
    <recommendedName>
        <fullName>Putative uncharacterized protein YbcY</fullName>
    </recommendedName>
</protein>
<comment type="miscellaneous">
    <text>Encoded by the cryptic lambdoid prophage DLP12.</text>
</comment>
<comment type="caution">
    <text evidence="1">Could be the product of a pseudogene.</text>
</comment>
<comment type="sequence caution" evidence="1">
    <conflict type="erroneous initiation">
        <sequence resource="EMBL-CDS" id="AAB40758"/>
    </conflict>
</comment>
<accession>P77460</accession>
<accession>Q2MBL9</accession>
<feature type="chain" id="PRO_0000013800" description="Putative uncharacterized protein YbcY">
    <location>
        <begin position="1"/>
        <end position="194"/>
    </location>
</feature>
<reference key="1">
    <citation type="submission" date="1997-01" db="EMBL/GenBank/DDBJ databases">
        <title>Sequence of minutes 4-25 of Escherichia coli.</title>
        <authorList>
            <person name="Chung E."/>
            <person name="Allen E."/>
            <person name="Araujo R."/>
            <person name="Aparicio A.M."/>
            <person name="Davis K."/>
            <person name="Duncan M."/>
            <person name="Federspiel N."/>
            <person name="Hyman R."/>
            <person name="Kalman S."/>
            <person name="Komp C."/>
            <person name="Kurdi O."/>
            <person name="Lew H."/>
            <person name="Lin D."/>
            <person name="Namath A."/>
            <person name="Oefner P."/>
            <person name="Roberts D."/>
            <person name="Schramm S."/>
            <person name="Davis R.W."/>
        </authorList>
    </citation>
    <scope>NUCLEOTIDE SEQUENCE [LARGE SCALE GENOMIC DNA]</scope>
    <source>
        <strain>K12 / MG1655 / ATCC 47076</strain>
    </source>
</reference>
<reference key="2">
    <citation type="journal article" date="1997" name="Science">
        <title>The complete genome sequence of Escherichia coli K-12.</title>
        <authorList>
            <person name="Blattner F.R."/>
            <person name="Plunkett G. III"/>
            <person name="Bloch C.A."/>
            <person name="Perna N.T."/>
            <person name="Burland V."/>
            <person name="Riley M."/>
            <person name="Collado-Vides J."/>
            <person name="Glasner J.D."/>
            <person name="Rode C.K."/>
            <person name="Mayhew G.F."/>
            <person name="Gregor J."/>
            <person name="Davis N.W."/>
            <person name="Kirkpatrick H.A."/>
            <person name="Goeden M.A."/>
            <person name="Rose D.J."/>
            <person name="Mau B."/>
            <person name="Shao Y."/>
        </authorList>
    </citation>
    <scope>NUCLEOTIDE SEQUENCE [LARGE SCALE GENOMIC DNA]</scope>
    <source>
        <strain>K12 / MG1655 / ATCC 47076</strain>
    </source>
</reference>
<reference key="3">
    <citation type="journal article" date="2006" name="Mol. Syst. Biol.">
        <title>Highly accurate genome sequences of Escherichia coli K-12 strains MG1655 and W3110.</title>
        <authorList>
            <person name="Hayashi K."/>
            <person name="Morooka N."/>
            <person name="Yamamoto Y."/>
            <person name="Fujita K."/>
            <person name="Isono K."/>
            <person name="Choi S."/>
            <person name="Ohtsubo E."/>
            <person name="Baba T."/>
            <person name="Wanner B.L."/>
            <person name="Mori H."/>
            <person name="Horiuchi T."/>
        </authorList>
    </citation>
    <scope>NUCLEOTIDE SEQUENCE [LARGE SCALE GENOMIC DNA]</scope>
    <source>
        <strain>K12 / W3110 / ATCC 27325 / DSM 5911</strain>
    </source>
</reference>